<gene>
    <name evidence="1" type="primary">uspB</name>
    <name type="ordered locus">YPA_3797</name>
</gene>
<organism>
    <name type="scientific">Yersinia pestis bv. Antiqua (strain Antiqua)</name>
    <dbReference type="NCBI Taxonomy" id="360102"/>
    <lineage>
        <taxon>Bacteria</taxon>
        <taxon>Pseudomonadati</taxon>
        <taxon>Pseudomonadota</taxon>
        <taxon>Gammaproteobacteria</taxon>
        <taxon>Enterobacterales</taxon>
        <taxon>Yersiniaceae</taxon>
        <taxon>Yersinia</taxon>
    </lineage>
</organism>
<feature type="chain" id="PRO_1000064886" description="Universal stress protein B">
    <location>
        <begin position="1"/>
        <end position="111"/>
    </location>
</feature>
<feature type="transmembrane region" description="Helical" evidence="1">
    <location>
        <begin position="1"/>
        <end position="21"/>
    </location>
</feature>
<feature type="transmembrane region" description="Helical" evidence="1">
    <location>
        <begin position="90"/>
        <end position="110"/>
    </location>
</feature>
<protein>
    <recommendedName>
        <fullName evidence="1">Universal stress protein B</fullName>
    </recommendedName>
</protein>
<reference key="1">
    <citation type="journal article" date="2006" name="J. Bacteriol.">
        <title>Complete genome sequence of Yersinia pestis strains Antiqua and Nepal516: evidence of gene reduction in an emerging pathogen.</title>
        <authorList>
            <person name="Chain P.S.G."/>
            <person name="Hu P."/>
            <person name="Malfatti S.A."/>
            <person name="Radnedge L."/>
            <person name="Larimer F."/>
            <person name="Vergez L.M."/>
            <person name="Worsham P."/>
            <person name="Chu M.C."/>
            <person name="Andersen G.L."/>
        </authorList>
    </citation>
    <scope>NUCLEOTIDE SEQUENCE [LARGE SCALE GENOMIC DNA]</scope>
    <source>
        <strain>Antiqua</strain>
    </source>
</reference>
<keyword id="KW-0997">Cell inner membrane</keyword>
<keyword id="KW-1003">Cell membrane</keyword>
<keyword id="KW-0472">Membrane</keyword>
<keyword id="KW-0812">Transmembrane</keyword>
<keyword id="KW-1133">Transmembrane helix</keyword>
<evidence type="ECO:0000255" key="1">
    <source>
        <dbReference type="HAMAP-Rule" id="MF_01088"/>
    </source>
</evidence>
<proteinExistence type="inferred from homology"/>
<comment type="subcellular location">
    <subcellularLocation>
        <location evidence="1">Cell inner membrane</location>
        <topology evidence="1">Multi-pass membrane protein</topology>
    </subcellularLocation>
</comment>
<comment type="similarity">
    <text evidence="1">Belongs to the universal stress protein B family.</text>
</comment>
<sequence length="111" mass="12680">MISTVALFWALCVVCVVNMARYYSSLRALLVVLRGCDPLLYQYVDGGGFFTSHGQPSKQIRLVGYIFAQRYLDHHDPEFIRRCERLRGQFILTSALCGLVVVSLVALMLWY</sequence>
<dbReference type="EMBL" id="CP000308">
    <property type="protein sequence ID" value="ABG15759.1"/>
    <property type="molecule type" value="Genomic_DNA"/>
</dbReference>
<dbReference type="RefSeq" id="WP_002209527.1">
    <property type="nucleotide sequence ID" value="NZ_CP009906.1"/>
</dbReference>
<dbReference type="GeneID" id="96663308"/>
<dbReference type="KEGG" id="ypa:YPA_3797"/>
<dbReference type="Proteomes" id="UP000001971">
    <property type="component" value="Chromosome"/>
</dbReference>
<dbReference type="GO" id="GO:0005886">
    <property type="term" value="C:plasma membrane"/>
    <property type="evidence" value="ECO:0007669"/>
    <property type="project" value="UniProtKB-SubCell"/>
</dbReference>
<dbReference type="HAMAP" id="MF_01088">
    <property type="entry name" value="UspB"/>
    <property type="match status" value="1"/>
</dbReference>
<dbReference type="InterPro" id="IPR019598">
    <property type="entry name" value="Universal_stress_protein_B"/>
</dbReference>
<dbReference type="NCBIfam" id="NF003435">
    <property type="entry name" value="PRK04960.1"/>
    <property type="match status" value="1"/>
</dbReference>
<dbReference type="Pfam" id="PF10625">
    <property type="entry name" value="UspB"/>
    <property type="match status" value="1"/>
</dbReference>
<accession>Q1C1B3</accession>
<name>USPB_YERPA</name>